<sequence>MERHQHLLSEYQQILTLSEQMLMLATVENWNALVDLEMTYLKAVENTANITISSCTSPVLQELLRQKLRSILENEIEIKRLLQRRLDKLSELVGQSTRQQAVNRTYGQFPDQALLLGETQ</sequence>
<accession>A9R7P5</accession>
<dbReference type="EMBL" id="CP000901">
    <property type="protein sequence ID" value="ABX87739.1"/>
    <property type="status" value="ALT_INIT"/>
    <property type="molecule type" value="Genomic_DNA"/>
</dbReference>
<dbReference type="RefSeq" id="WP_002211148.1">
    <property type="nucleotide sequence ID" value="NZ_CP009935.1"/>
</dbReference>
<dbReference type="SMR" id="A9R7P5"/>
<dbReference type="GeneID" id="57976742"/>
<dbReference type="KEGG" id="ypg:YpAngola_A2020"/>
<dbReference type="PATRIC" id="fig|349746.12.peg.3000"/>
<dbReference type="GO" id="GO:0005829">
    <property type="term" value="C:cytosol"/>
    <property type="evidence" value="ECO:0007669"/>
    <property type="project" value="UniProtKB-SubCell"/>
</dbReference>
<dbReference type="GO" id="GO:0044781">
    <property type="term" value="P:bacterial-type flagellum organization"/>
    <property type="evidence" value="ECO:0007669"/>
    <property type="project" value="UniProtKB-KW"/>
</dbReference>
<dbReference type="GO" id="GO:1902209">
    <property type="term" value="P:negative regulation of bacterial-type flagellum assembly"/>
    <property type="evidence" value="ECO:0007669"/>
    <property type="project" value="UniProtKB-UniRule"/>
</dbReference>
<dbReference type="GO" id="GO:0006457">
    <property type="term" value="P:protein folding"/>
    <property type="evidence" value="ECO:0007669"/>
    <property type="project" value="UniProtKB-UniRule"/>
</dbReference>
<dbReference type="Gene3D" id="1.20.58.380">
    <property type="entry name" value="Flagellar protein flit"/>
    <property type="match status" value="1"/>
</dbReference>
<dbReference type="HAMAP" id="MF_01180">
    <property type="entry name" value="FliT"/>
    <property type="match status" value="1"/>
</dbReference>
<dbReference type="InterPro" id="IPR008622">
    <property type="entry name" value="FliT"/>
</dbReference>
<dbReference type="NCBIfam" id="NF007836">
    <property type="entry name" value="PRK10548.1"/>
    <property type="match status" value="1"/>
</dbReference>
<dbReference type="Pfam" id="PF05400">
    <property type="entry name" value="FliT"/>
    <property type="match status" value="1"/>
</dbReference>
<feature type="chain" id="PRO_0000353898" description="Flagellar protein FliT">
    <location>
        <begin position="1"/>
        <end position="120"/>
    </location>
</feature>
<feature type="region of interest" description="Required for homodimerization" evidence="1">
    <location>
        <begin position="1"/>
        <end position="50"/>
    </location>
</feature>
<feature type="region of interest" description="FliD binding" evidence="1">
    <location>
        <begin position="60"/>
        <end position="98"/>
    </location>
</feature>
<name>FLIT_YERPG</name>
<evidence type="ECO:0000255" key="1">
    <source>
        <dbReference type="HAMAP-Rule" id="MF_01180"/>
    </source>
</evidence>
<evidence type="ECO:0000305" key="2"/>
<organism>
    <name type="scientific">Yersinia pestis bv. Antiqua (strain Angola)</name>
    <dbReference type="NCBI Taxonomy" id="349746"/>
    <lineage>
        <taxon>Bacteria</taxon>
        <taxon>Pseudomonadati</taxon>
        <taxon>Pseudomonadota</taxon>
        <taxon>Gammaproteobacteria</taxon>
        <taxon>Enterobacterales</taxon>
        <taxon>Yersiniaceae</taxon>
        <taxon>Yersinia</taxon>
    </lineage>
</organism>
<gene>
    <name evidence="1" type="primary">fliT</name>
    <name type="ordered locus">YpAngola_A2020</name>
</gene>
<reference key="1">
    <citation type="journal article" date="2010" name="J. Bacteriol.">
        <title>Genome sequence of the deep-rooted Yersinia pestis strain Angola reveals new insights into the evolution and pangenome of the plague bacterium.</title>
        <authorList>
            <person name="Eppinger M."/>
            <person name="Worsham P.L."/>
            <person name="Nikolich M.P."/>
            <person name="Riley D.R."/>
            <person name="Sebastian Y."/>
            <person name="Mou S."/>
            <person name="Achtman M."/>
            <person name="Lindler L.E."/>
            <person name="Ravel J."/>
        </authorList>
    </citation>
    <scope>NUCLEOTIDE SEQUENCE [LARGE SCALE GENOMIC DNA]</scope>
    <source>
        <strain>Angola</strain>
    </source>
</reference>
<comment type="function">
    <text evidence="1">Dual-function protein that regulates the transcription of class 2 flagellar operons and that also acts as an export chaperone for the filament-capping protein FliD. As a transcriptional regulator, acts as an anti-FlhDC factor; it directly binds FlhC, thus inhibiting the binding of the FlhC/FlhD complex to class 2 promoters, resulting in decreased expression of class 2 flagellar operons. As a chaperone, effects FliD transition to the membrane by preventing its premature polymerization, and by directing it to the export apparatus.</text>
</comment>
<comment type="subunit">
    <text evidence="1">Homodimer. Interacts with FliD and FlhC.</text>
</comment>
<comment type="subcellular location">
    <subcellularLocation>
        <location evidence="1">Cytoplasm</location>
        <location evidence="1">Cytosol</location>
    </subcellularLocation>
</comment>
<comment type="similarity">
    <text evidence="1">Belongs to the FliT family.</text>
</comment>
<comment type="sequence caution" evidence="2">
    <conflict type="erroneous initiation">
        <sequence resource="EMBL-CDS" id="ABX87739"/>
    </conflict>
</comment>
<keyword id="KW-1005">Bacterial flagellum biogenesis</keyword>
<keyword id="KW-0143">Chaperone</keyword>
<keyword id="KW-0963">Cytoplasm</keyword>
<keyword id="KW-0678">Repressor</keyword>
<keyword id="KW-0804">Transcription</keyword>
<keyword id="KW-0805">Transcription regulation</keyword>
<protein>
    <recommendedName>
        <fullName evidence="1">Flagellar protein FliT</fullName>
    </recommendedName>
</protein>
<proteinExistence type="inferred from homology"/>